<feature type="chain" id="PRO_1000061453" description="UDP-N-acetylmuramoylalanine--D-glutamate ligase">
    <location>
        <begin position="1"/>
        <end position="430"/>
    </location>
</feature>
<feature type="binding site" evidence="1">
    <location>
        <begin position="105"/>
        <end position="111"/>
    </location>
    <ligand>
        <name>ATP</name>
        <dbReference type="ChEBI" id="CHEBI:30616"/>
    </ligand>
</feature>
<name>MURD_PSELT</name>
<evidence type="ECO:0000255" key="1">
    <source>
        <dbReference type="HAMAP-Rule" id="MF_00639"/>
    </source>
</evidence>
<gene>
    <name evidence="1" type="primary">murD</name>
    <name type="ordered locus">Tlet_0637</name>
</gene>
<dbReference type="EC" id="6.3.2.9" evidence="1"/>
<dbReference type="EMBL" id="CP000812">
    <property type="protein sequence ID" value="ABV33203.1"/>
    <property type="molecule type" value="Genomic_DNA"/>
</dbReference>
<dbReference type="RefSeq" id="WP_012002684.1">
    <property type="nucleotide sequence ID" value="NZ_BSDV01000001.1"/>
</dbReference>
<dbReference type="SMR" id="A8F4W9"/>
<dbReference type="STRING" id="416591.Tlet_0637"/>
<dbReference type="KEGG" id="tle:Tlet_0637"/>
<dbReference type="eggNOG" id="COG0771">
    <property type="taxonomic scope" value="Bacteria"/>
</dbReference>
<dbReference type="HOGENOM" id="CLU_032540_1_0_0"/>
<dbReference type="OrthoDB" id="9809796at2"/>
<dbReference type="UniPathway" id="UPA00219"/>
<dbReference type="Proteomes" id="UP000002016">
    <property type="component" value="Chromosome"/>
</dbReference>
<dbReference type="GO" id="GO:0005737">
    <property type="term" value="C:cytoplasm"/>
    <property type="evidence" value="ECO:0007669"/>
    <property type="project" value="UniProtKB-SubCell"/>
</dbReference>
<dbReference type="GO" id="GO:0005524">
    <property type="term" value="F:ATP binding"/>
    <property type="evidence" value="ECO:0007669"/>
    <property type="project" value="UniProtKB-UniRule"/>
</dbReference>
<dbReference type="GO" id="GO:0008764">
    <property type="term" value="F:UDP-N-acetylmuramoylalanine-D-glutamate ligase activity"/>
    <property type="evidence" value="ECO:0007669"/>
    <property type="project" value="UniProtKB-UniRule"/>
</dbReference>
<dbReference type="GO" id="GO:0051301">
    <property type="term" value="P:cell division"/>
    <property type="evidence" value="ECO:0007669"/>
    <property type="project" value="UniProtKB-KW"/>
</dbReference>
<dbReference type="GO" id="GO:0071555">
    <property type="term" value="P:cell wall organization"/>
    <property type="evidence" value="ECO:0007669"/>
    <property type="project" value="UniProtKB-KW"/>
</dbReference>
<dbReference type="GO" id="GO:0009252">
    <property type="term" value="P:peptidoglycan biosynthetic process"/>
    <property type="evidence" value="ECO:0007669"/>
    <property type="project" value="UniProtKB-UniRule"/>
</dbReference>
<dbReference type="GO" id="GO:0008360">
    <property type="term" value="P:regulation of cell shape"/>
    <property type="evidence" value="ECO:0007669"/>
    <property type="project" value="UniProtKB-KW"/>
</dbReference>
<dbReference type="Gene3D" id="3.90.190.20">
    <property type="entry name" value="Mur ligase, C-terminal domain"/>
    <property type="match status" value="1"/>
</dbReference>
<dbReference type="Gene3D" id="3.40.1190.10">
    <property type="entry name" value="Mur-like, catalytic domain"/>
    <property type="match status" value="1"/>
</dbReference>
<dbReference type="Gene3D" id="3.40.50.720">
    <property type="entry name" value="NAD(P)-binding Rossmann-like Domain"/>
    <property type="match status" value="1"/>
</dbReference>
<dbReference type="HAMAP" id="MF_00639">
    <property type="entry name" value="MurD"/>
    <property type="match status" value="1"/>
</dbReference>
<dbReference type="InterPro" id="IPR036565">
    <property type="entry name" value="Mur-like_cat_sf"/>
</dbReference>
<dbReference type="InterPro" id="IPR004101">
    <property type="entry name" value="Mur_ligase_C"/>
</dbReference>
<dbReference type="InterPro" id="IPR036615">
    <property type="entry name" value="Mur_ligase_C_dom_sf"/>
</dbReference>
<dbReference type="InterPro" id="IPR013221">
    <property type="entry name" value="Mur_ligase_cen"/>
</dbReference>
<dbReference type="InterPro" id="IPR005762">
    <property type="entry name" value="MurD"/>
</dbReference>
<dbReference type="NCBIfam" id="TIGR01087">
    <property type="entry name" value="murD"/>
    <property type="match status" value="1"/>
</dbReference>
<dbReference type="PANTHER" id="PTHR43692">
    <property type="entry name" value="UDP-N-ACETYLMURAMOYLALANINE--D-GLUTAMATE LIGASE"/>
    <property type="match status" value="1"/>
</dbReference>
<dbReference type="PANTHER" id="PTHR43692:SF1">
    <property type="entry name" value="UDP-N-ACETYLMURAMOYLALANINE--D-GLUTAMATE LIGASE"/>
    <property type="match status" value="1"/>
</dbReference>
<dbReference type="Pfam" id="PF02875">
    <property type="entry name" value="Mur_ligase_C"/>
    <property type="match status" value="1"/>
</dbReference>
<dbReference type="Pfam" id="PF08245">
    <property type="entry name" value="Mur_ligase_M"/>
    <property type="match status" value="1"/>
</dbReference>
<dbReference type="Pfam" id="PF21377">
    <property type="entry name" value="MurD_N"/>
    <property type="match status" value="1"/>
</dbReference>
<dbReference type="SUPFAM" id="SSF51984">
    <property type="entry name" value="MurCD N-terminal domain"/>
    <property type="match status" value="1"/>
</dbReference>
<dbReference type="SUPFAM" id="SSF53623">
    <property type="entry name" value="MurD-like peptide ligases, catalytic domain"/>
    <property type="match status" value="1"/>
</dbReference>
<dbReference type="SUPFAM" id="SSF53244">
    <property type="entry name" value="MurD-like peptide ligases, peptide-binding domain"/>
    <property type="match status" value="1"/>
</dbReference>
<sequence length="430" mass="48847">MYYALVGYGVSNKALCEKLISMGHKIFVSELRKFTDEEKEWFSKKGIDFEEGKNSDRICEADRIVVSPSVRFDHPALAKCRGKTFSDIEVVLDMNKPNFVIAVTGSNGKTTSCKLLSFVFQKLGLDSYACGNIGTPAADVLGFKTKYLVLEISSFQLFWSKMLHIDIGVVLNIQPNHLDWHPSLEHYAKSKLKLLEFSKTGIYNCSDQNIMKFISEKSNLCAFDPLKIRKVDDGIVYEGKYYTFKNDFLKTHQNLQNLSAILKIFSVMNFDLKQVLEILEDFKPLKHRMEFVDEINGVVFLNDSKATSSAATISALENFNSRNVILLLAGRGKNEDYADLIAQIKRKAKHVIVFGEMVELLRDELKLSDIPYTISENMQNAVLKAFEISEKGDVVLLSPAGASFDMYRNYQERGEHFINMVKLLRGKLLE</sequence>
<reference key="1">
    <citation type="submission" date="2007-08" db="EMBL/GenBank/DDBJ databases">
        <title>Complete sequence of Thermotoga lettingae TMO.</title>
        <authorList>
            <consortium name="US DOE Joint Genome Institute"/>
            <person name="Copeland A."/>
            <person name="Lucas S."/>
            <person name="Lapidus A."/>
            <person name="Barry K."/>
            <person name="Glavina del Rio T."/>
            <person name="Dalin E."/>
            <person name="Tice H."/>
            <person name="Pitluck S."/>
            <person name="Foster B."/>
            <person name="Bruce D."/>
            <person name="Schmutz J."/>
            <person name="Larimer F."/>
            <person name="Land M."/>
            <person name="Hauser L."/>
            <person name="Kyrpides N."/>
            <person name="Mikhailova N."/>
            <person name="Nelson K."/>
            <person name="Gogarten J.P."/>
            <person name="Noll K."/>
            <person name="Richardson P."/>
        </authorList>
    </citation>
    <scope>NUCLEOTIDE SEQUENCE [LARGE SCALE GENOMIC DNA]</scope>
    <source>
        <strain>ATCC BAA-301 / DSM 14385 / NBRC 107922 / TMO</strain>
    </source>
</reference>
<accession>A8F4W9</accession>
<keyword id="KW-0067">ATP-binding</keyword>
<keyword id="KW-0131">Cell cycle</keyword>
<keyword id="KW-0132">Cell division</keyword>
<keyword id="KW-0133">Cell shape</keyword>
<keyword id="KW-0961">Cell wall biogenesis/degradation</keyword>
<keyword id="KW-0963">Cytoplasm</keyword>
<keyword id="KW-0436">Ligase</keyword>
<keyword id="KW-0547">Nucleotide-binding</keyword>
<keyword id="KW-0573">Peptidoglycan synthesis</keyword>
<keyword id="KW-1185">Reference proteome</keyword>
<comment type="function">
    <text evidence="1">Cell wall formation. Catalyzes the addition of glutamate to the nucleotide precursor UDP-N-acetylmuramoyl-L-alanine (UMA).</text>
</comment>
<comment type="catalytic activity">
    <reaction evidence="1">
        <text>UDP-N-acetyl-alpha-D-muramoyl-L-alanine + D-glutamate + ATP = UDP-N-acetyl-alpha-D-muramoyl-L-alanyl-D-glutamate + ADP + phosphate + H(+)</text>
        <dbReference type="Rhea" id="RHEA:16429"/>
        <dbReference type="ChEBI" id="CHEBI:15378"/>
        <dbReference type="ChEBI" id="CHEBI:29986"/>
        <dbReference type="ChEBI" id="CHEBI:30616"/>
        <dbReference type="ChEBI" id="CHEBI:43474"/>
        <dbReference type="ChEBI" id="CHEBI:83898"/>
        <dbReference type="ChEBI" id="CHEBI:83900"/>
        <dbReference type="ChEBI" id="CHEBI:456216"/>
        <dbReference type="EC" id="6.3.2.9"/>
    </reaction>
</comment>
<comment type="pathway">
    <text evidence="1">Cell wall biogenesis; peptidoglycan biosynthesis.</text>
</comment>
<comment type="subcellular location">
    <subcellularLocation>
        <location evidence="1">Cytoplasm</location>
    </subcellularLocation>
</comment>
<comment type="similarity">
    <text evidence="1">Belongs to the MurCDEF family.</text>
</comment>
<proteinExistence type="inferred from homology"/>
<organism>
    <name type="scientific">Pseudothermotoga lettingae (strain ATCC BAA-301 / DSM 14385 / NBRC 107922 / TMO)</name>
    <name type="common">Thermotoga lettingae</name>
    <dbReference type="NCBI Taxonomy" id="416591"/>
    <lineage>
        <taxon>Bacteria</taxon>
        <taxon>Thermotogati</taxon>
        <taxon>Thermotogota</taxon>
        <taxon>Thermotogae</taxon>
        <taxon>Thermotogales</taxon>
        <taxon>Thermotogaceae</taxon>
        <taxon>Pseudothermotoga</taxon>
    </lineage>
</organism>
<protein>
    <recommendedName>
        <fullName evidence="1">UDP-N-acetylmuramoylalanine--D-glutamate ligase</fullName>
        <ecNumber evidence="1">6.3.2.9</ecNumber>
    </recommendedName>
    <alternativeName>
        <fullName evidence="1">D-glutamic acid-adding enzyme</fullName>
    </alternativeName>
    <alternativeName>
        <fullName evidence="1">UDP-N-acetylmuramoyl-L-alanyl-D-glutamate synthetase</fullName>
    </alternativeName>
</protein>